<feature type="chain" id="PRO_1000079344" description="Large ribosomal subunit protein bL32">
    <location>
        <begin position="1"/>
        <end position="56"/>
    </location>
</feature>
<feature type="region of interest" description="Disordered" evidence="2">
    <location>
        <begin position="1"/>
        <end position="40"/>
    </location>
</feature>
<feature type="compositionally biased region" description="Basic residues" evidence="2">
    <location>
        <begin position="7"/>
        <end position="16"/>
    </location>
</feature>
<feature type="compositionally biased region" description="Polar residues" evidence="2">
    <location>
        <begin position="21"/>
        <end position="31"/>
    </location>
</feature>
<dbReference type="EMBL" id="CP000931">
    <property type="protein sequence ID" value="ABZ76338.1"/>
    <property type="molecule type" value="Genomic_DNA"/>
</dbReference>
<dbReference type="RefSeq" id="WP_012276873.1">
    <property type="nucleotide sequence ID" value="NC_010334.1"/>
</dbReference>
<dbReference type="SMR" id="B0TQU3"/>
<dbReference type="STRING" id="458817.Shal_1773"/>
<dbReference type="KEGG" id="shl:Shal_1773"/>
<dbReference type="eggNOG" id="COG0333">
    <property type="taxonomic scope" value="Bacteria"/>
</dbReference>
<dbReference type="HOGENOM" id="CLU_129084_2_1_6"/>
<dbReference type="OrthoDB" id="9801927at2"/>
<dbReference type="Proteomes" id="UP000001317">
    <property type="component" value="Chromosome"/>
</dbReference>
<dbReference type="GO" id="GO:0015934">
    <property type="term" value="C:large ribosomal subunit"/>
    <property type="evidence" value="ECO:0007669"/>
    <property type="project" value="InterPro"/>
</dbReference>
<dbReference type="GO" id="GO:0003735">
    <property type="term" value="F:structural constituent of ribosome"/>
    <property type="evidence" value="ECO:0007669"/>
    <property type="project" value="InterPro"/>
</dbReference>
<dbReference type="GO" id="GO:0006412">
    <property type="term" value="P:translation"/>
    <property type="evidence" value="ECO:0007669"/>
    <property type="project" value="UniProtKB-UniRule"/>
</dbReference>
<dbReference type="HAMAP" id="MF_00340">
    <property type="entry name" value="Ribosomal_bL32"/>
    <property type="match status" value="1"/>
</dbReference>
<dbReference type="InterPro" id="IPR002677">
    <property type="entry name" value="Ribosomal_bL32"/>
</dbReference>
<dbReference type="InterPro" id="IPR044957">
    <property type="entry name" value="Ribosomal_bL32_bact"/>
</dbReference>
<dbReference type="InterPro" id="IPR011332">
    <property type="entry name" value="Ribosomal_zn-bd"/>
</dbReference>
<dbReference type="NCBIfam" id="TIGR01031">
    <property type="entry name" value="rpmF_bact"/>
    <property type="match status" value="1"/>
</dbReference>
<dbReference type="PANTHER" id="PTHR35534">
    <property type="entry name" value="50S RIBOSOMAL PROTEIN L32"/>
    <property type="match status" value="1"/>
</dbReference>
<dbReference type="PANTHER" id="PTHR35534:SF1">
    <property type="entry name" value="LARGE RIBOSOMAL SUBUNIT PROTEIN BL32"/>
    <property type="match status" value="1"/>
</dbReference>
<dbReference type="Pfam" id="PF01783">
    <property type="entry name" value="Ribosomal_L32p"/>
    <property type="match status" value="1"/>
</dbReference>
<dbReference type="SUPFAM" id="SSF57829">
    <property type="entry name" value="Zn-binding ribosomal proteins"/>
    <property type="match status" value="1"/>
</dbReference>
<organism>
    <name type="scientific">Shewanella halifaxensis (strain HAW-EB4)</name>
    <dbReference type="NCBI Taxonomy" id="458817"/>
    <lineage>
        <taxon>Bacteria</taxon>
        <taxon>Pseudomonadati</taxon>
        <taxon>Pseudomonadota</taxon>
        <taxon>Gammaproteobacteria</taxon>
        <taxon>Alteromonadales</taxon>
        <taxon>Shewanellaceae</taxon>
        <taxon>Shewanella</taxon>
    </lineage>
</organism>
<protein>
    <recommendedName>
        <fullName evidence="1">Large ribosomal subunit protein bL32</fullName>
    </recommendedName>
    <alternativeName>
        <fullName evidence="3">50S ribosomal protein L32</fullName>
    </alternativeName>
</protein>
<sequence length="56" mass="6310">MAVQQNKKSRSKRGMRRSHDSLGTAQLSVDATSGELHRRHNVTADGFYRGQKVINK</sequence>
<gene>
    <name evidence="1" type="primary">rpmF</name>
    <name type="ordered locus">Shal_1773</name>
</gene>
<accession>B0TQU3</accession>
<proteinExistence type="inferred from homology"/>
<evidence type="ECO:0000255" key="1">
    <source>
        <dbReference type="HAMAP-Rule" id="MF_00340"/>
    </source>
</evidence>
<evidence type="ECO:0000256" key="2">
    <source>
        <dbReference type="SAM" id="MobiDB-lite"/>
    </source>
</evidence>
<evidence type="ECO:0000305" key="3"/>
<comment type="similarity">
    <text evidence="1">Belongs to the bacterial ribosomal protein bL32 family.</text>
</comment>
<reference key="1">
    <citation type="submission" date="2008-01" db="EMBL/GenBank/DDBJ databases">
        <title>Complete sequence of Shewanella halifaxensis HAW-EB4.</title>
        <authorList>
            <consortium name="US DOE Joint Genome Institute"/>
            <person name="Copeland A."/>
            <person name="Lucas S."/>
            <person name="Lapidus A."/>
            <person name="Glavina del Rio T."/>
            <person name="Dalin E."/>
            <person name="Tice H."/>
            <person name="Bruce D."/>
            <person name="Goodwin L."/>
            <person name="Pitluck S."/>
            <person name="Sims D."/>
            <person name="Brettin T."/>
            <person name="Detter J.C."/>
            <person name="Han C."/>
            <person name="Kuske C.R."/>
            <person name="Schmutz J."/>
            <person name="Larimer F."/>
            <person name="Land M."/>
            <person name="Hauser L."/>
            <person name="Kyrpides N."/>
            <person name="Kim E."/>
            <person name="Zhao J.-S."/>
            <person name="Richardson P."/>
        </authorList>
    </citation>
    <scope>NUCLEOTIDE SEQUENCE [LARGE SCALE GENOMIC DNA]</scope>
    <source>
        <strain>HAW-EB4</strain>
    </source>
</reference>
<name>RL32_SHEHH</name>
<keyword id="KW-0687">Ribonucleoprotein</keyword>
<keyword id="KW-0689">Ribosomal protein</keyword>